<feature type="initiator methionine" description="Removed" evidence="1">
    <location>
        <position position="1"/>
    </location>
</feature>
<feature type="chain" id="PRO_0000090341" description="Triosephosphate isomerase">
    <location>
        <begin position="2"/>
        <end position="228"/>
    </location>
</feature>
<feature type="active site" description="Electrophile" evidence="2">
    <location>
        <position position="96"/>
    </location>
</feature>
<feature type="active site" description="Proton acceptor" evidence="2">
    <location>
        <position position="144"/>
    </location>
</feature>
<feature type="binding site" evidence="2">
    <location>
        <begin position="12"/>
        <end position="14"/>
    </location>
    <ligand>
        <name>substrate</name>
    </ligand>
</feature>
<feature type="binding site" evidence="2">
    <location>
        <position position="149"/>
    </location>
    <ligand>
        <name>substrate</name>
    </ligand>
</feature>
<feature type="binding site" evidence="2">
    <location>
        <position position="184"/>
    </location>
    <ligand>
        <name>substrate</name>
    </ligand>
</feature>
<feature type="binding site" evidence="2">
    <location>
        <begin position="205"/>
        <end position="206"/>
    </location>
    <ligand>
        <name>substrate</name>
    </ligand>
</feature>
<gene>
    <name evidence="2" type="primary">tpiA</name>
    <name type="synonym">tpi</name>
    <name type="ordered locus">PF1920</name>
</gene>
<reference key="1">
    <citation type="journal article" date="1999" name="Genetics">
        <title>Divergence of the hyperthermophilic archaea Pyrococcus furiosus and P. horikoshii inferred from complete genomic sequences.</title>
        <authorList>
            <person name="Maeder D.L."/>
            <person name="Weiss R.B."/>
            <person name="Dunn D.M."/>
            <person name="Cherry J.L."/>
            <person name="Gonzalez J.M."/>
            <person name="DiRuggiero J."/>
            <person name="Robb F.T."/>
        </authorList>
    </citation>
    <scope>NUCLEOTIDE SEQUENCE [LARGE SCALE GENOMIC DNA]</scope>
    <source>
        <strain>ATCC 43587 / DSM 3638 / JCM 8422 / Vc1</strain>
    </source>
</reference>
<sequence length="228" mass="24066">MAKLKEPIIAINFKTYIEATGKRALEIAKAAEKVYKETGVTIVVAPQLVDLRMIAESVEIPVFAQHIDPIKPGSHTGHVLPEAVKEAGAVGTLLNHSENRMILADLEAAIRRAEEVGLMTMVCSNNPAVSAAVAALNPDYVAVEPPELIGTGIPVSKAKPEVITNTVELVKKVNPEVKVLCGAGISTGEDVKKAIELGTVGVLLASGVTKAKDPEKAIWDLVSGIIKE</sequence>
<accession>P62002</accession>
<accession>P95583</accession>
<evidence type="ECO:0000250" key="1"/>
<evidence type="ECO:0000255" key="2">
    <source>
        <dbReference type="HAMAP-Rule" id="MF_00147"/>
    </source>
</evidence>
<name>TPIS_PYRFU</name>
<proteinExistence type="inferred from homology"/>
<comment type="function">
    <text evidence="2">Involved in the gluconeogenesis. Catalyzes stereospecifically the conversion of dihydroxyacetone phosphate (DHAP) to D-glyceraldehyde-3-phosphate (G3P).</text>
</comment>
<comment type="catalytic activity">
    <reaction evidence="2">
        <text>D-glyceraldehyde 3-phosphate = dihydroxyacetone phosphate</text>
        <dbReference type="Rhea" id="RHEA:18585"/>
        <dbReference type="ChEBI" id="CHEBI:57642"/>
        <dbReference type="ChEBI" id="CHEBI:59776"/>
        <dbReference type="EC" id="5.3.1.1"/>
    </reaction>
</comment>
<comment type="pathway">
    <text evidence="2">Carbohydrate biosynthesis; gluconeogenesis.</text>
</comment>
<comment type="pathway">
    <text evidence="2">Carbohydrate degradation; glycolysis; D-glyceraldehyde 3-phosphate from glycerone phosphate: step 1/1.</text>
</comment>
<comment type="subunit">
    <text evidence="2">Homotetramer; dimer of dimers.</text>
</comment>
<comment type="subcellular location">
    <subcellularLocation>
        <location evidence="2">Cytoplasm</location>
    </subcellularLocation>
</comment>
<comment type="similarity">
    <text evidence="2">Belongs to the triosephosphate isomerase family.</text>
</comment>
<organism>
    <name type="scientific">Pyrococcus furiosus (strain ATCC 43587 / DSM 3638 / JCM 8422 / Vc1)</name>
    <dbReference type="NCBI Taxonomy" id="186497"/>
    <lineage>
        <taxon>Archaea</taxon>
        <taxon>Methanobacteriati</taxon>
        <taxon>Methanobacteriota</taxon>
        <taxon>Thermococci</taxon>
        <taxon>Thermococcales</taxon>
        <taxon>Thermococcaceae</taxon>
        <taxon>Pyrococcus</taxon>
    </lineage>
</organism>
<protein>
    <recommendedName>
        <fullName evidence="2">Triosephosphate isomerase</fullName>
        <shortName evidence="2">TIM</shortName>
        <shortName evidence="2">TPI</shortName>
        <ecNumber evidence="2">5.3.1.1</ecNumber>
    </recommendedName>
    <alternativeName>
        <fullName evidence="2">Triose-phosphate isomerase</fullName>
    </alternativeName>
</protein>
<keyword id="KW-0963">Cytoplasm</keyword>
<keyword id="KW-0312">Gluconeogenesis</keyword>
<keyword id="KW-0324">Glycolysis</keyword>
<keyword id="KW-0413">Isomerase</keyword>
<keyword id="KW-1185">Reference proteome</keyword>
<dbReference type="EC" id="5.3.1.1" evidence="2"/>
<dbReference type="EMBL" id="AE009950">
    <property type="protein sequence ID" value="AAL82044.1"/>
    <property type="molecule type" value="Genomic_DNA"/>
</dbReference>
<dbReference type="PIR" id="A44632">
    <property type="entry name" value="A44632"/>
</dbReference>
<dbReference type="RefSeq" id="WP_011013060.1">
    <property type="nucleotide sequence ID" value="NZ_CP023154.1"/>
</dbReference>
<dbReference type="SMR" id="P62002"/>
<dbReference type="STRING" id="186497.PF1920"/>
<dbReference type="PaxDb" id="186497-PF1920"/>
<dbReference type="GeneID" id="41713741"/>
<dbReference type="KEGG" id="pfu:PF1920"/>
<dbReference type="PATRIC" id="fig|186497.12.peg.1991"/>
<dbReference type="eggNOG" id="arCOG01087">
    <property type="taxonomic scope" value="Archaea"/>
</dbReference>
<dbReference type="HOGENOM" id="CLU_104921_0_0_2"/>
<dbReference type="OrthoDB" id="9465at2157"/>
<dbReference type="PhylomeDB" id="P62002"/>
<dbReference type="BRENDA" id="5.3.1.1">
    <property type="organism ID" value="5243"/>
</dbReference>
<dbReference type="UniPathway" id="UPA00109">
    <property type="reaction ID" value="UER00189"/>
</dbReference>
<dbReference type="UniPathway" id="UPA00138"/>
<dbReference type="Proteomes" id="UP000001013">
    <property type="component" value="Chromosome"/>
</dbReference>
<dbReference type="GO" id="GO:0005829">
    <property type="term" value="C:cytosol"/>
    <property type="evidence" value="ECO:0007669"/>
    <property type="project" value="TreeGrafter"/>
</dbReference>
<dbReference type="GO" id="GO:0004807">
    <property type="term" value="F:triose-phosphate isomerase activity"/>
    <property type="evidence" value="ECO:0007669"/>
    <property type="project" value="UniProtKB-UniRule"/>
</dbReference>
<dbReference type="GO" id="GO:0006094">
    <property type="term" value="P:gluconeogenesis"/>
    <property type="evidence" value="ECO:0007669"/>
    <property type="project" value="UniProtKB-UniRule"/>
</dbReference>
<dbReference type="GO" id="GO:0046166">
    <property type="term" value="P:glyceraldehyde-3-phosphate biosynthetic process"/>
    <property type="evidence" value="ECO:0007669"/>
    <property type="project" value="TreeGrafter"/>
</dbReference>
<dbReference type="GO" id="GO:0019563">
    <property type="term" value="P:glycerol catabolic process"/>
    <property type="evidence" value="ECO:0007669"/>
    <property type="project" value="TreeGrafter"/>
</dbReference>
<dbReference type="GO" id="GO:0006096">
    <property type="term" value="P:glycolytic process"/>
    <property type="evidence" value="ECO:0007669"/>
    <property type="project" value="UniProtKB-UniRule"/>
</dbReference>
<dbReference type="CDD" id="cd00311">
    <property type="entry name" value="TIM"/>
    <property type="match status" value="1"/>
</dbReference>
<dbReference type="FunFam" id="3.20.20.70:FF:000223">
    <property type="entry name" value="Triosephosphate isomerase"/>
    <property type="match status" value="1"/>
</dbReference>
<dbReference type="Gene3D" id="3.20.20.70">
    <property type="entry name" value="Aldolase class I"/>
    <property type="match status" value="1"/>
</dbReference>
<dbReference type="HAMAP" id="MF_00147_A">
    <property type="entry name" value="TIM_A"/>
    <property type="match status" value="1"/>
</dbReference>
<dbReference type="InterPro" id="IPR013785">
    <property type="entry name" value="Aldolase_TIM"/>
</dbReference>
<dbReference type="InterPro" id="IPR035990">
    <property type="entry name" value="TIM_sf"/>
</dbReference>
<dbReference type="InterPro" id="IPR000652">
    <property type="entry name" value="Triosephosphate_isomerase"/>
</dbReference>
<dbReference type="InterPro" id="IPR022891">
    <property type="entry name" value="Triosephosphate_isomerase_arc"/>
</dbReference>
<dbReference type="InterPro" id="IPR020861">
    <property type="entry name" value="Triosephosphate_isomerase_AS"/>
</dbReference>
<dbReference type="NCBIfam" id="NF003302">
    <property type="entry name" value="PRK04302.1"/>
    <property type="match status" value="1"/>
</dbReference>
<dbReference type="NCBIfam" id="TIGR00419">
    <property type="entry name" value="tim"/>
    <property type="match status" value="1"/>
</dbReference>
<dbReference type="PANTHER" id="PTHR21139">
    <property type="entry name" value="TRIOSEPHOSPHATE ISOMERASE"/>
    <property type="match status" value="1"/>
</dbReference>
<dbReference type="PANTHER" id="PTHR21139:SF42">
    <property type="entry name" value="TRIOSEPHOSPHATE ISOMERASE"/>
    <property type="match status" value="1"/>
</dbReference>
<dbReference type="Pfam" id="PF00121">
    <property type="entry name" value="TIM"/>
    <property type="match status" value="1"/>
</dbReference>
<dbReference type="SUPFAM" id="SSF51351">
    <property type="entry name" value="Triosephosphate isomerase (TIM)"/>
    <property type="match status" value="1"/>
</dbReference>
<dbReference type="PROSITE" id="PS00171">
    <property type="entry name" value="TIM_1"/>
    <property type="match status" value="1"/>
</dbReference>
<dbReference type="PROSITE" id="PS51440">
    <property type="entry name" value="TIM_2"/>
    <property type="match status" value="1"/>
</dbReference>